<comment type="function">
    <text evidence="1 2 3 4 5 6 8 10 11 12 13 15 17 19">Plays a major role in antagonizing the type I IFN-mediated antiviral response by degrading or inhibiting multiple cellular factors required for either IFN induction or response pathways (PubMed:15047850). Acts cooperatively with NS2 to repress activation and nuclear translocation of host IFN-regulatory factor IRF3 (PubMed:15827150). Also disrupts the association of IRF3 with CREBBP (PubMed:21632562). Interacts with host mitochondrial-associated membrane (MAM) MAVS and prevents the interaction with RIGI (Probable) (PubMed:22383950). Interacts with TRIM25 to suppress TRIM25-mediated RIGI ubiquitination and thereby RIGI-MAVS interaction (PubMed:30558248). Together with NS2, participates in the proteasomal degradation of host STAT2, IRF3, IRF7, TBK1 and RIGI through a NS-degradasome involving CUL2 and Elongin-C (PubMed:17251292, PubMed:23877405). The degradasome requires an intact mitochondrial MAVS (PubMed:23877405). Decreases the levels of host TRAF3 and IKBKE/IKK-epsilon (PubMed:19625398). As functions other than disruptions of the type I IFN-mediated antiviral signaling pathways, induces host SOCS1 and SOCS3 expression (PubMed:24480984, PubMed:26557722). Suppresses premature apoptosis by an NF-kappa-B-dependent, interferon-independent mechanism and thus facilitates virus growth (PubMed:17151097). Additionally, NS1 may serve some inhibitory role in viral transcription and RNA replication (PubMed:9445048). Suppresses proliferation and activation of host CD103+ CD8+ cytotoxic T-lymphocytes and Th17 helper T-lymphocytes (PubMed:21533073).</text>
</comment>
<comment type="subunit">
    <text evidence="4 8 9 10 15 16">Monomer (PubMed:8864205). Homomultimer (PubMed:21795342, PubMed:8864205). Heteromultimer with NS2 (PubMed:21795342). Interacts with the matrix protein M (PubMed:8864205). Interacts with host ELOC and CUL2; this interaction allows NS1 to form an active E3 ligase with ELOC and CUL2 (PubMed:17251292). Interacts with host IRF3; this interaction leads to the disrupted association of IRF3 with CREBBP and thus reduced binding of IRF3 to the IFN-beta promoter (PubMed:21632562). Interacts with host MAVS; this interaction prevents MAVS binding to RIGI and inhibits signaling pathway leading to interferon production (PubMed:22383950). Interacts with host MAP1B/microtubule-associated protein 1B (PubMed:21795342). Interacts with host TRIM25 (via SPRY domain); this interaction suppresses RIGI ubiquitination and results in decreased interaction between RIGI and MAVS (PubMed:30558248).</text>
</comment>
<comment type="subcellular location">
    <subcellularLocation>
        <location evidence="10">Host cytoplasm</location>
    </subcellularLocation>
    <subcellularLocation>
        <location evidence="10 11">Host mitochondrion</location>
    </subcellularLocation>
    <subcellularLocation>
        <location evidence="9">Host nucleus</location>
    </subcellularLocation>
    <text evidence="9 11">Most NS1 resides in the mitochondria as a heteromer with NS2.</text>
</comment>
<comment type="domain">
    <text evidence="9">N-terminus is important for IKBKE/IKK-epsilon reduction (PubMed:21795342). The DNLP motif has IFN suppressive functions like binding to host MAP1B (PubMed:21795342).</text>
</comment>
<comment type="similarity">
    <text evidence="18">Belongs to the pneumovirus non-structural protein 1 family.</text>
</comment>
<dbReference type="EMBL" id="M11486">
    <property type="protein sequence ID" value="AAB59850.1"/>
    <property type="molecule type" value="Genomic_RNA"/>
</dbReference>
<dbReference type="EMBL" id="U50362">
    <property type="protein sequence ID" value="AAB86656.1"/>
    <property type="molecule type" value="Genomic_RNA"/>
</dbReference>
<dbReference type="EMBL" id="U50363">
    <property type="protein sequence ID" value="AAB86668.1"/>
    <property type="molecule type" value="Genomic_RNA"/>
</dbReference>
<dbReference type="EMBL" id="U63644">
    <property type="protein sequence ID" value="AAC55962.1"/>
    <property type="molecule type" value="Genomic_RNA"/>
</dbReference>
<dbReference type="EMBL" id="AF035006">
    <property type="protein sequence ID" value="AAC14894.1"/>
    <property type="molecule type" value="Genomic_RNA"/>
</dbReference>
<dbReference type="PIR" id="A94336">
    <property type="entry name" value="MNNZ1C"/>
</dbReference>
<dbReference type="SMR" id="P0DOE9"/>
<dbReference type="IntAct" id="P0DOE9">
    <property type="interactions" value="220"/>
</dbReference>
<dbReference type="Reactome" id="R-HSA-918233">
    <property type="pathway name" value="TRAF3-dependent IRF activation pathway"/>
</dbReference>
<dbReference type="Reactome" id="R-HSA-9828721">
    <property type="pathway name" value="Translation of respiratory syncytial virus mRNAs"/>
</dbReference>
<dbReference type="Reactome" id="R-HSA-9828806">
    <property type="pathway name" value="Maturation of hRSV A proteins"/>
</dbReference>
<dbReference type="Reactome" id="R-HSA-9833109">
    <property type="pathway name" value="Evasion by RSV of host interferon responses"/>
</dbReference>
<dbReference type="Reactome" id="R-HSA-9833110">
    <property type="pathway name" value="RSV-host interactions"/>
</dbReference>
<dbReference type="Proteomes" id="UP000007678">
    <property type="component" value="Genome"/>
</dbReference>
<dbReference type="Proteomes" id="UP000134464">
    <property type="component" value="Genome"/>
</dbReference>
<dbReference type="Proteomes" id="UP000181145">
    <property type="component" value="Genome"/>
</dbReference>
<dbReference type="Proteomes" id="UP000181262">
    <property type="component" value="Genome"/>
</dbReference>
<dbReference type="Proteomes" id="UP000181559">
    <property type="component" value="Genome"/>
</dbReference>
<dbReference type="GO" id="GO:0033650">
    <property type="term" value="C:host cell mitochondrion"/>
    <property type="evidence" value="ECO:0007669"/>
    <property type="project" value="UniProtKB-SubCell"/>
</dbReference>
<dbReference type="GO" id="GO:0042025">
    <property type="term" value="C:host cell nucleus"/>
    <property type="evidence" value="ECO:0007669"/>
    <property type="project" value="UniProtKB-SubCell"/>
</dbReference>
<dbReference type="GO" id="GO:0052150">
    <property type="term" value="P:symbiont-mediated perturbation of host apoptosis"/>
    <property type="evidence" value="ECO:0007669"/>
    <property type="project" value="UniProtKB-KW"/>
</dbReference>
<dbReference type="GO" id="GO:0039504">
    <property type="term" value="P:symbiont-mediated suppression of host adaptive immune response"/>
    <property type="evidence" value="ECO:0007669"/>
    <property type="project" value="UniProtKB-KW"/>
</dbReference>
<dbReference type="GO" id="GO:0039548">
    <property type="term" value="P:symbiont-mediated suppression of host cytoplasmic pattern recognition receptor signaling pathway via inhibition of IRF3 activity"/>
    <property type="evidence" value="ECO:0007669"/>
    <property type="project" value="UniProtKB-KW"/>
</dbReference>
<dbReference type="GO" id="GO:0039557">
    <property type="term" value="P:symbiont-mediated suppression of host cytoplasmic pattern recognition receptor signaling pathway via inhibition of IRF7 activity"/>
    <property type="evidence" value="ECO:0007669"/>
    <property type="project" value="UniProtKB-KW"/>
</dbReference>
<dbReference type="GO" id="GO:0039545">
    <property type="term" value="P:symbiont-mediated suppression of host cytoplasmic pattern recognition receptor signaling pathway via inhibition of MAVS activity"/>
    <property type="evidence" value="ECO:0007669"/>
    <property type="project" value="UniProtKB-KW"/>
</dbReference>
<dbReference type="GO" id="GO:0039540">
    <property type="term" value="P:symbiont-mediated suppression of host cytoplasmic pattern recognition receptor signaling pathway via inhibition of RIG-I activity"/>
    <property type="evidence" value="ECO:0007669"/>
    <property type="project" value="UniProtKB-KW"/>
</dbReference>
<dbReference type="GO" id="GO:0039723">
    <property type="term" value="P:symbiont-mediated suppression of host cytoplasmic pattern recognition receptor signaling pathway via inhibition of TBK1 activity"/>
    <property type="evidence" value="ECO:0007669"/>
    <property type="project" value="UniProtKB-KW"/>
</dbReference>
<dbReference type="GO" id="GO:0039564">
    <property type="term" value="P:symbiont-mediated suppression of host JAK-STAT cascade via inhibition of STAT2 activity"/>
    <property type="evidence" value="ECO:0007669"/>
    <property type="project" value="UniProtKB-KW"/>
</dbReference>
<dbReference type="GO" id="GO:0039722">
    <property type="term" value="P:symbiont-mediated suppression of host toll-like receptor signaling pathway"/>
    <property type="evidence" value="ECO:0007669"/>
    <property type="project" value="UniProtKB-KW"/>
</dbReference>
<dbReference type="GO" id="GO:0039502">
    <property type="term" value="P:symbiont-mediated suppression of host type I interferon-mediated signaling pathway"/>
    <property type="evidence" value="ECO:0007669"/>
    <property type="project" value="UniProtKB-KW"/>
</dbReference>
<dbReference type="InterPro" id="IPR005099">
    <property type="entry name" value="Pneumo_NS1"/>
</dbReference>
<dbReference type="Pfam" id="PF03438">
    <property type="entry name" value="Pneumo_NS1"/>
    <property type="match status" value="1"/>
</dbReference>
<proteinExistence type="evidence at protein level"/>
<name>NS1_HRSVA</name>
<organism>
    <name type="scientific">Human respiratory syncytial virus A (strain A2)</name>
    <dbReference type="NCBI Taxonomy" id="11259"/>
    <lineage>
        <taxon>Viruses</taxon>
        <taxon>Riboviria</taxon>
        <taxon>Orthornavirae</taxon>
        <taxon>Negarnaviricota</taxon>
        <taxon>Haploviricotina</taxon>
        <taxon>Monjiviricetes</taxon>
        <taxon>Mononegavirales</taxon>
        <taxon>Pneumoviridae</taxon>
        <taxon>Orthopneumovirus</taxon>
        <taxon>Orthopneumovirus hominis</taxon>
    </lineage>
</organism>
<reference key="1">
    <citation type="journal article" date="1985" name="Virology">
        <title>Nucleotide sequences of the 1B and 1C nonstructural protein mRNAs of human respiratory syncytial virus.</title>
        <authorList>
            <person name="Collins P.L."/>
            <person name="Wertz G.W."/>
        </authorList>
    </citation>
    <scope>NUCLEOTIDE SEQUENCE [GENOMIC RNA]</scope>
</reference>
<reference key="2">
    <citation type="journal article" date="1985" name="J. Virol.">
        <title>mRNA sequence of three respiratory syncytial virus genes encoding two nonstructural proteins and a 22K structural protein.</title>
        <authorList>
            <person name="Elango N."/>
            <person name="Satake M."/>
            <person name="Venkatesan S."/>
        </authorList>
    </citation>
    <scope>NUCLEOTIDE SEQUENCE [GENOMIC RNA]</scope>
</reference>
<reference key="3">
    <citation type="journal article" date="1995" name="Virology">
        <title>A cold-passaged, attenuated strain of human respiratory syncytial virus contains mutations in the F and L genes.</title>
        <authorList>
            <person name="Connors M."/>
            <person name="Crowe J.E. Jr."/>
            <person name="Firestone C.Y."/>
            <person name="Murphy B.R."/>
            <person name="Collins P.L."/>
        </authorList>
    </citation>
    <scope>NUCLEOTIDE SEQUENCE [GENOMIC RNA]</scope>
</reference>
<reference key="4">
    <citation type="journal article" date="1996" name="Virus Genes">
        <title>Acquisition of the ts phenotype by a chemically mutagenized cold-passaged human respiratory syncytial virus vaccine candidate results from the acquisition of a single mutation in the polymerase (L) gene.</title>
        <authorList>
            <person name="Crowe J.E. Jr."/>
            <person name="Firestone C.Y."/>
            <person name="Whitehead S.S."/>
            <person name="Collins P.L."/>
            <person name="Murphy B.R."/>
        </authorList>
    </citation>
    <scope>NUCLEOTIDE SEQUENCE [GENOMIC RNA]</scope>
</reference>
<reference key="5">
    <citation type="journal article" date="1998" name="J. Virol.">
        <title>Recombinant respiratory syncytial virus (RSV) bearing a set of mutations from cold-passaged RSV is attenuated in chimpanzees.</title>
        <authorList>
            <person name="Whitehead S.S."/>
            <person name="Juhasz K."/>
            <person name="Firestone C.Y."/>
            <person name="Collins P.L."/>
            <person name="Murphy B.R."/>
        </authorList>
    </citation>
    <scope>NUCLEOTIDE SEQUENCE [GENOMIC RNA]</scope>
    <source>
        <strain>Cold-passage attenuated</strain>
    </source>
</reference>
<reference key="6">
    <citation type="journal article" date="1996" name="Virus Res.">
        <title>Expression and characterisation of the NS1 and NS2 proteins of respiratory syncytial virus.</title>
        <authorList>
            <person name="Evans J.E."/>
            <person name="Cane P.A."/>
            <person name="Pringle C.R."/>
        </authorList>
    </citation>
    <scope>SUBUNIT</scope>
    <scope>INTERACTION WITH M PROTEIN</scope>
</reference>
<reference key="7">
    <citation type="journal article" date="1998" name="J. Virol.">
        <title>The NS1 protein of human respiratory syncytial virus is a potent inhibitor of minigenome transcription and RNA replication.</title>
        <authorList>
            <person name="Atreya P.L."/>
            <person name="Peeples M.E."/>
            <person name="Collins P.L."/>
        </authorList>
    </citation>
    <scope>FUNCTION</scope>
</reference>
<reference key="8">
    <citation type="journal article" date="2004" name="J. Virol.">
        <title>Suppression of the induction of alpha, beta, and lambda interferons by the NS1 and NS2 proteins of human respiratory syncytial virus in human epithelial cells and macrophages.</title>
        <authorList>
            <person name="Spann K.M."/>
            <person name="Tran K.C."/>
            <person name="Chi B."/>
            <person name="Rabin R.L."/>
            <person name="Collins P.L."/>
        </authorList>
    </citation>
    <scope>FUNCTION</scope>
</reference>
<reference key="9">
    <citation type="journal article" date="2005" name="J. Virol.">
        <title>Effects of nonstructural proteins NS1 and NS2 of human respiratory syncytial virus on interferon regulatory factor 3, NF-kappaB, and proinflammatory cytokines.</title>
        <authorList>
            <person name="Spann K.M."/>
            <person name="Tran K.C."/>
            <person name="Collins P.L."/>
        </authorList>
    </citation>
    <scope>FUNCTION</scope>
</reference>
<reference key="10">
    <citation type="journal article" date="2007" name="J. Virol.">
        <title>Nonstructural proteins of respiratory syncytial virus suppress premature apoptosis by an NF-kappaB-dependent, interferon-independent mechanism and facilitate virus growth.</title>
        <authorList>
            <person name="Bitko V."/>
            <person name="Shulyayeva O."/>
            <person name="Mazumder B."/>
            <person name="Musiyenko A."/>
            <person name="Ramaswamy M."/>
            <person name="Look D.C."/>
            <person name="Barik S."/>
        </authorList>
    </citation>
    <scope>FUNCTION</scope>
</reference>
<reference key="11">
    <citation type="journal article" date="2007" name="J. Virol.">
        <title>Respiratory syncytial virus NS1 protein degrades STAT2 by using the Elongin-Cullin E3 ligase.</title>
        <authorList>
            <person name="Elliott J."/>
            <person name="Lynch O.T."/>
            <person name="Suessmuth Y."/>
            <person name="Qian P."/>
            <person name="Boyd C.R."/>
            <person name="Burrows J.F."/>
            <person name="Buick R."/>
            <person name="Stevenson N.J."/>
            <person name="Touzelet O."/>
            <person name="Gadina M."/>
            <person name="Power U.F."/>
            <person name="Johnston J.A."/>
        </authorList>
    </citation>
    <scope>INTERACTION WITH HOST ELOC AND CUL2</scope>
    <scope>FUNCTION</scope>
</reference>
<reference key="12">
    <citation type="journal article" date="2009" name="J. Virol.">
        <title>Respiratory syncytial virus nonstructural proteins decrease levels of multiple members of the cellular interferon pathways.</title>
        <authorList>
            <person name="Swedan S."/>
            <person name="Musiyenko A."/>
            <person name="Barik S."/>
        </authorList>
    </citation>
    <scope>FUNCTION</scope>
</reference>
<reference key="13">
    <citation type="journal article" date="2011" name="J. Virol.">
        <title>Multiple functional domains and complexes of the two nonstructural proteins of human respiratory syncytial virus contribute to interferon suppression and cellular location.</title>
        <authorList>
            <person name="Swedan S."/>
            <person name="Andrews J."/>
            <person name="Majumdar T."/>
            <person name="Musiyenko A."/>
            <person name="Barik S."/>
        </authorList>
    </citation>
    <scope>SUBCELLULAR LOCATION</scope>
    <scope>DOMAIN</scope>
    <scope>SUBUNIT</scope>
    <scope>INTERACTION WITH HOST MAP1B</scope>
    <scope>INTERACTION WITH NS2</scope>
</reference>
<reference key="14">
    <citation type="journal article" date="2011" name="PLoS Pathog.">
        <title>Respiratory syncytial virus interferon antagonist NS1 protein suppresses and skews the human T lymphocyte response.</title>
        <authorList>
            <person name="Munir S."/>
            <person name="Hillyer P."/>
            <person name="Le Nouen C."/>
            <person name="Buchholz U.J."/>
            <person name="Rabin R.L."/>
            <person name="Collins P.L."/>
            <person name="Bukreyev A."/>
        </authorList>
    </citation>
    <scope>FUNCTION</scope>
</reference>
<reference key="15">
    <citation type="journal article" date="2011" name="J. Gen. Virol.">
        <title>A novel mechanism for the inhibition of interferon regulatory factor-3-dependent gene expression by human respiratory syncytial virus NS1 protein.</title>
        <authorList>
            <person name="Ren J."/>
            <person name="Liu T."/>
            <person name="Pang L."/>
            <person name="Li K."/>
            <person name="Garofalo R.P."/>
            <person name="Casola A."/>
            <person name="Bao X."/>
        </authorList>
    </citation>
    <scope>INTERACTION WITH HOST IRF3</scope>
    <scope>FUNCTION</scope>
</reference>
<reference key="16">
    <citation type="journal article" date="2011" name="Virol. J.">
        <title>Mutation of the elongin C binding domain of human respiratory syncytial virus non-structural protein 1 (NS1) results in degradation of NS1 and attenuation of the virus.</title>
        <authorList>
            <person name="Straub C.P."/>
            <person name="Lau W.H."/>
            <person name="Preston F.M."/>
            <person name="Headlam M.J."/>
            <person name="Gorman J.J."/>
            <person name="Collins P.L."/>
            <person name="Spann K.M."/>
        </authorList>
    </citation>
    <scope>MUTAGENESIS OF 22-VAL--CYS-29</scope>
</reference>
<reference key="17">
    <citation type="journal article" date="2012" name="PLoS ONE">
        <title>Respiratory syncytial virus NS1 protein colocalizes with mitochondrial antiviral signaling protein MAVS following infection.</title>
        <authorList>
            <person name="Boyapalle S."/>
            <person name="Wong T."/>
            <person name="Garay J."/>
            <person name="Teng M."/>
            <person name="San Juan-Vergara H."/>
            <person name="Mohapatra S."/>
            <person name="Mohapatra S."/>
        </authorList>
    </citation>
    <scope>FUNCTION</scope>
    <scope>SUBCELLULAR LOCATION</scope>
    <scope>INTERACTION WITH HOST MAVS</scope>
</reference>
<reference key="18">
    <citation type="journal article" date="2013" name="Cell Res.">
        <title>Viral degradasome hijacks mitochondria to suppress innate immunity.</title>
        <authorList>
            <person name="Goswami R."/>
            <person name="Majumdar T."/>
            <person name="Dhar J."/>
            <person name="Chattopadhyay S."/>
            <person name="Bandyopadhyay S.K."/>
            <person name="Verbovetskaya V."/>
            <person name="Sen G.C."/>
            <person name="Barik S."/>
        </authorList>
    </citation>
    <scope>FUNCTION</scope>
    <scope>SUBCELLULAR LOCATION</scope>
</reference>
<reference key="19">
    <citation type="journal article" date="2014" name="Intervirology">
        <title>Respiratory syncytial virus NS1 protein degrades STAT2 by inducing SOCS1 expression.</title>
        <authorList>
            <person name="Xu X."/>
            <person name="Zheng J."/>
            <person name="Zheng K."/>
            <person name="Hou Y."/>
            <person name="Zhao F."/>
            <person name="Zhao D."/>
        </authorList>
    </citation>
    <scope>FUNCTION</scope>
</reference>
<reference key="20">
    <citation type="journal article" date="2015" name="J. Immunol. Res.">
        <title>Respiratory Syncytial Virus Nonstructural Proteins Upregulate SOCS1 and SOCS3 in the Different Manner from Endogenous IFN Signaling.</title>
        <authorList>
            <person name="Zheng J."/>
            <person name="Yang P."/>
            <person name="Tang Y."/>
            <person name="Pan Z."/>
            <person name="Zhao D."/>
        </authorList>
    </citation>
    <scope>FUNCTION</scope>
</reference>
<reference key="21">
    <citation type="journal article" date="2017" name="Nat. Microbiol.">
        <title>Structural basis for human respiratory syncytial virus NS1-mediated modulation of host responses.</title>
        <authorList>
            <person name="Chatterjee S."/>
            <person name="Luthra P."/>
            <person name="Esaulova E."/>
            <person name="Agapov E."/>
            <person name="Yen B.C."/>
            <person name="Borek D.M."/>
            <person name="Edwards M.R."/>
            <person name="Mittal A."/>
            <person name="Jordan D.S."/>
            <person name="Ramanan P."/>
            <person name="Moore M.L."/>
            <person name="Pappu R.V."/>
            <person name="Holtzman M.J."/>
            <person name="Artyomov M.N."/>
            <person name="Basler C.F."/>
            <person name="Amarasinghe G.K."/>
            <person name="Leung D.W."/>
        </authorList>
    </citation>
    <scope>MUTAGENESIS OF TYR-125 AND 132-LEU-LEU-133</scope>
</reference>
<reference key="22">
    <citation type="journal article" date="2018" name="Viruses">
        <title>Human Respiratory Syncytial Virus NS 1 Targets TRIM25 to Suppress RIG-I Ubiquitination and Subsequent RIG-I-Mediated Antiviral Signaling.</title>
        <authorList>
            <person name="Ban J."/>
            <person name="Lee N.R."/>
            <person name="Lee N.J."/>
            <person name="Lee J.K."/>
            <person name="Quan F.S."/>
            <person name="Inn K.S."/>
        </authorList>
    </citation>
    <scope>INTERACTION WITH HOST TRIM25</scope>
    <scope>FUNCTION</scope>
</reference>
<reference key="23">
    <citation type="journal article" date="2019" name="PLoS Pathog.">
        <title>Respiratory syncytial virus nonstructural proteins 1 and 2: Exceptional disrupters of innate immune responses.</title>
        <authorList>
            <person name="Sedeyn K."/>
            <person name="Schepens B."/>
            <person name="Saelens X."/>
        </authorList>
    </citation>
    <scope>REVIEW</scope>
</reference>
<reference key="24">
    <citation type="journal article" date="2020" name="Front. Cell. Infect. Microbiol.">
        <title>Respiratory Syncytial Virus's Non-structural Proteins: Masters of Interference.</title>
        <authorList>
            <person name="Thornhill E.M."/>
            <person name="Verhoeven D."/>
        </authorList>
    </citation>
    <scope>REVIEW</scope>
</reference>
<organismHost>
    <name type="scientific">Homo sapiens</name>
    <name type="common">Human</name>
    <dbReference type="NCBI Taxonomy" id="9606"/>
</organismHost>
<feature type="chain" id="PRO_0000142783" description="Non-structural protein 1">
    <location>
        <begin position="1"/>
        <end position="139"/>
    </location>
</feature>
<feature type="short sequence motif" description="DLNP; interaction with MAP1B" evidence="9">
    <location>
        <begin position="136"/>
        <end position="139"/>
    </location>
</feature>
<feature type="mutagenesis site" description="Mislocalizes NS1 to lysosomes." evidence="7">
    <original>VALLKITC</original>
    <variation>AALAKITA</variation>
    <location>
        <begin position="22"/>
        <end position="29"/>
    </location>
</feature>
<feature type="mutagenesis site" description="Decreased viral RNA replication and loss of inhibition of IFN-beta production." evidence="14">
    <original>Y</original>
    <variation>A</variation>
    <location>
        <position position="125"/>
    </location>
</feature>
<feature type="mutagenesis site" description="Decreased viral RNA replication and loss of inhibition of IFN-beta production." evidence="14">
    <original>L</original>
    <variation>A</variation>
    <location>
        <position position="132"/>
    </location>
</feature>
<feature type="mutagenesis site" description="Decreased viral RNA replication and loss of inhibition of IFN-beta production." evidence="14">
    <original>L</original>
    <variation>A</variation>
    <location>
        <position position="133"/>
    </location>
</feature>
<keyword id="KW-1035">Host cytoplasm</keyword>
<keyword id="KW-1045">Host mitochondrion</keyword>
<keyword id="KW-1048">Host nucleus</keyword>
<keyword id="KW-0945">Host-virus interaction</keyword>
<keyword id="KW-1080">Inhibition of host adaptive immune response by virus</keyword>
<keyword id="KW-1090">Inhibition of host innate immune response by virus</keyword>
<keyword id="KW-1114">Inhibition of host interferon signaling pathway by virus</keyword>
<keyword id="KW-1092">Inhibition of host IRF3 by virus</keyword>
<keyword id="KW-1093">Inhibition of host IRF7 by virus</keyword>
<keyword id="KW-1097">Inhibition of host MAVS by virus</keyword>
<keyword id="KW-1088">Inhibition of host RIG-I by virus</keyword>
<keyword id="KW-1113">Inhibition of host RLR pathway by virus</keyword>
<keyword id="KW-1106">Inhibition of host STAT2 by virus</keyword>
<keyword id="KW-1223">Inhibition of host TBK1 by virus</keyword>
<keyword id="KW-1225">Inhibition of host TLR pathway by virus</keyword>
<keyword id="KW-0922">Interferon antiviral system evasion</keyword>
<keyword id="KW-1119">Modulation of host cell apoptosis by virus</keyword>
<keyword id="KW-0899">Viral immunoevasion</keyword>
<evidence type="ECO:0000269" key="1">
    <source>
    </source>
</evidence>
<evidence type="ECO:0000269" key="2">
    <source>
    </source>
</evidence>
<evidence type="ECO:0000269" key="3">
    <source>
    </source>
</evidence>
<evidence type="ECO:0000269" key="4">
    <source>
    </source>
</evidence>
<evidence type="ECO:0000269" key="5">
    <source>
    </source>
</evidence>
<evidence type="ECO:0000269" key="6">
    <source>
    </source>
</evidence>
<evidence type="ECO:0000269" key="7">
    <source>
    </source>
</evidence>
<evidence type="ECO:0000269" key="8">
    <source>
    </source>
</evidence>
<evidence type="ECO:0000269" key="9">
    <source>
    </source>
</evidence>
<evidence type="ECO:0000269" key="10">
    <source>
    </source>
</evidence>
<evidence type="ECO:0000269" key="11">
    <source>
    </source>
</evidence>
<evidence type="ECO:0000269" key="12">
    <source>
    </source>
</evidence>
<evidence type="ECO:0000269" key="13">
    <source>
    </source>
</evidence>
<evidence type="ECO:0000269" key="14">
    <source>
    </source>
</evidence>
<evidence type="ECO:0000269" key="15">
    <source>
    </source>
</evidence>
<evidence type="ECO:0000269" key="16">
    <source>
    </source>
</evidence>
<evidence type="ECO:0000269" key="17">
    <source>
    </source>
</evidence>
<evidence type="ECO:0000305" key="18"/>
<evidence type="ECO:0000305" key="19">
    <source>
    </source>
</evidence>
<accession>P0DOE9</accession>
<accession>P04544</accession>
<accession>Q77YB7</accession>
<sequence length="139" mass="15567">MGSNSLSMIKVRLQNLFDNDEVALLKITCYTDKLIHLTNALAKAVIHTIKLNGIVFVHVITSSDICPNNNIVVKSNFTTMPVLQNGGYIWEMMELTHCSQPNGLLDDNCEIKFSKKLSDSTMTNYMNQLSELLGFDLNP</sequence>
<protein>
    <recommendedName>
        <fullName>Non-structural protein 1</fullName>
        <shortName>NS1</shortName>
    </recommendedName>
    <alternativeName>
        <fullName>Non-structural protein 1C</fullName>
    </alternativeName>
</protein>
<gene>
    <name type="primary">1C</name>
    <name type="synonym">NS1</name>
</gene>